<protein>
    <recommendedName>
        <fullName evidence="6">AarF domain-containing kinase 1</fullName>
        <ecNumber evidence="3">2.7.-.-</ecNumber>
    </recommendedName>
</protein>
<name>ADCK_DROME</name>
<feature type="transit peptide" description="Mitochondrion" evidence="7">
    <location>
        <begin position="1"/>
        <end status="unknown"/>
    </location>
</feature>
<feature type="chain" id="PRO_0000448065" description="AarF domain-containing kinase 1" evidence="2">
    <location>
        <begin status="unknown"/>
        <end position="518"/>
    </location>
</feature>
<feature type="domain" description="Protein kinase" evidence="3">
    <location>
        <begin position="149"/>
        <end position="468"/>
    </location>
</feature>
<feature type="active site" description="Proton acceptor" evidence="3">
    <location>
        <position position="309"/>
    </location>
</feature>
<feature type="binding site" evidence="3">
    <location>
        <begin position="155"/>
        <end position="163"/>
    </location>
    <ligand>
        <name>ATP</name>
        <dbReference type="ChEBI" id="CHEBI:30616"/>
    </ligand>
</feature>
<feature type="binding site" evidence="3">
    <location>
        <position position="177"/>
    </location>
    <ligand>
        <name>ATP</name>
        <dbReference type="ChEBI" id="CHEBI:30616"/>
    </ligand>
</feature>
<feature type="mutagenesis site" description="Third instar larval lethal. First and second instar larvae are reduced in size." evidence="4">
    <location>
        <begin position="343"/>
        <end position="463"/>
    </location>
</feature>
<organism evidence="10">
    <name type="scientific">Drosophila melanogaster</name>
    <name type="common">Fruit fly</name>
    <dbReference type="NCBI Taxonomy" id="7227"/>
    <lineage>
        <taxon>Eukaryota</taxon>
        <taxon>Metazoa</taxon>
        <taxon>Ecdysozoa</taxon>
        <taxon>Arthropoda</taxon>
        <taxon>Hexapoda</taxon>
        <taxon>Insecta</taxon>
        <taxon>Pterygota</taxon>
        <taxon>Neoptera</taxon>
        <taxon>Endopterygota</taxon>
        <taxon>Diptera</taxon>
        <taxon>Brachycera</taxon>
        <taxon>Muscomorpha</taxon>
        <taxon>Ephydroidea</taxon>
        <taxon>Drosophilidae</taxon>
        <taxon>Drosophila</taxon>
        <taxon>Sophophora</taxon>
    </lineage>
</organism>
<keyword id="KW-0067">ATP-binding</keyword>
<keyword id="KW-0418">Kinase</keyword>
<keyword id="KW-0496">Mitochondrion</keyword>
<keyword id="KW-0547">Nucleotide-binding</keyword>
<keyword id="KW-1185">Reference proteome</keyword>
<keyword id="KW-0808">Transferase</keyword>
<keyword id="KW-0809">Transit peptide</keyword>
<dbReference type="EC" id="2.7.-.-" evidence="3"/>
<dbReference type="EMBL" id="AE013599">
    <property type="protein sequence ID" value="AAF47244.2"/>
    <property type="molecule type" value="Genomic_DNA"/>
</dbReference>
<dbReference type="EMBL" id="AY118660">
    <property type="protein sequence ID" value="AAM50029.1"/>
    <property type="molecule type" value="mRNA"/>
</dbReference>
<dbReference type="EMBL" id="AE013599">
    <property type="protein sequence ID" value="AHN56646.1"/>
    <property type="molecule type" value="Genomic_DNA"/>
</dbReference>
<dbReference type="RefSeq" id="NP_001286851.1">
    <property type="nucleotide sequence ID" value="NM_001299922.1"/>
</dbReference>
<dbReference type="RefSeq" id="NP_611947.2">
    <property type="nucleotide sequence ID" value="NM_138103.3"/>
</dbReference>
<dbReference type="SMR" id="Q9W133"/>
<dbReference type="FunCoup" id="Q9W133">
    <property type="interactions" value="853"/>
</dbReference>
<dbReference type="IntAct" id="Q9W133">
    <property type="interactions" value="1"/>
</dbReference>
<dbReference type="STRING" id="7227.FBpp0310095"/>
<dbReference type="PaxDb" id="7227-FBpp0072227"/>
<dbReference type="DNASU" id="37938"/>
<dbReference type="EnsemblMetazoa" id="FBtr0072320">
    <property type="protein sequence ID" value="FBpp0072227"/>
    <property type="gene ID" value="FBgn0035039"/>
</dbReference>
<dbReference type="EnsemblMetazoa" id="FBtr0343487">
    <property type="protein sequence ID" value="FBpp0310095"/>
    <property type="gene ID" value="FBgn0035039"/>
</dbReference>
<dbReference type="GeneID" id="37938"/>
<dbReference type="KEGG" id="dme:Dmel_CG3608"/>
<dbReference type="UCSC" id="CG3608-RA">
    <property type="organism name" value="d. melanogaster"/>
</dbReference>
<dbReference type="AGR" id="FB:FBgn0035039"/>
<dbReference type="CTD" id="57143"/>
<dbReference type="FlyBase" id="FBgn0035039">
    <property type="gene designation" value="Adck1"/>
</dbReference>
<dbReference type="VEuPathDB" id="VectorBase:FBgn0035039"/>
<dbReference type="eggNOG" id="KOG1235">
    <property type="taxonomic scope" value="Eukaryota"/>
</dbReference>
<dbReference type="GeneTree" id="ENSGT00940000158221"/>
<dbReference type="HOGENOM" id="CLU_006533_2_0_1"/>
<dbReference type="InParanoid" id="Q9W133"/>
<dbReference type="OMA" id="RCNPEDI"/>
<dbReference type="OrthoDB" id="427480at2759"/>
<dbReference type="PhylomeDB" id="Q9W133"/>
<dbReference type="BioGRID-ORCS" id="37938">
    <property type="hits" value="0 hits in 3 CRISPR screens"/>
</dbReference>
<dbReference type="GenomeRNAi" id="37938"/>
<dbReference type="PRO" id="PR:Q9W133"/>
<dbReference type="Proteomes" id="UP000000803">
    <property type="component" value="Chromosome 2R"/>
</dbReference>
<dbReference type="Bgee" id="FBgn0035039">
    <property type="expression patterns" value="Expressed in spermatid in male reproductive gland and 54 other cell types or tissues"/>
</dbReference>
<dbReference type="GO" id="GO:0005743">
    <property type="term" value="C:mitochondrial inner membrane"/>
    <property type="evidence" value="ECO:0000250"/>
    <property type="project" value="FlyBase"/>
</dbReference>
<dbReference type="GO" id="GO:0005524">
    <property type="term" value="F:ATP binding"/>
    <property type="evidence" value="ECO:0007669"/>
    <property type="project" value="UniProtKB-KW"/>
</dbReference>
<dbReference type="GO" id="GO:0004672">
    <property type="term" value="F:protein kinase activity"/>
    <property type="evidence" value="ECO:0007669"/>
    <property type="project" value="InterPro"/>
</dbReference>
<dbReference type="GO" id="GO:0055088">
    <property type="term" value="P:lipid homeostasis"/>
    <property type="evidence" value="ECO:0000250"/>
    <property type="project" value="FlyBase"/>
</dbReference>
<dbReference type="GO" id="GO:0007005">
    <property type="term" value="P:mitochondrion organization"/>
    <property type="evidence" value="ECO:0000250"/>
    <property type="project" value="FlyBase"/>
</dbReference>
<dbReference type="GO" id="GO:0010637">
    <property type="term" value="P:negative regulation of mitochondrial fusion"/>
    <property type="evidence" value="ECO:0000315"/>
    <property type="project" value="UniProtKB"/>
</dbReference>
<dbReference type="GO" id="GO:1903852">
    <property type="term" value="P:positive regulation of cristae formation"/>
    <property type="evidence" value="ECO:0000315"/>
    <property type="project" value="UniProtKB"/>
</dbReference>
<dbReference type="CDD" id="cd13969">
    <property type="entry name" value="ADCK1-like"/>
    <property type="match status" value="1"/>
</dbReference>
<dbReference type="Gene3D" id="1.10.510.10">
    <property type="entry name" value="Transferase(Phosphotransferase) domain 1"/>
    <property type="match status" value="1"/>
</dbReference>
<dbReference type="InterPro" id="IPR004147">
    <property type="entry name" value="ABC1_dom"/>
</dbReference>
<dbReference type="InterPro" id="IPR045307">
    <property type="entry name" value="ADCK1_dom"/>
</dbReference>
<dbReference type="InterPro" id="IPR011009">
    <property type="entry name" value="Kinase-like_dom_sf"/>
</dbReference>
<dbReference type="InterPro" id="IPR051130">
    <property type="entry name" value="Mito_struct-func_regulator"/>
</dbReference>
<dbReference type="InterPro" id="IPR000719">
    <property type="entry name" value="Prot_kinase_dom"/>
</dbReference>
<dbReference type="PANTHER" id="PTHR43173:SF19">
    <property type="entry name" value="AARF DOMAIN-CONTAINING PROTEIN KINASE 1"/>
    <property type="match status" value="1"/>
</dbReference>
<dbReference type="PANTHER" id="PTHR43173">
    <property type="entry name" value="ABC1 FAMILY PROTEIN"/>
    <property type="match status" value="1"/>
</dbReference>
<dbReference type="Pfam" id="PF03109">
    <property type="entry name" value="ABC1"/>
    <property type="match status" value="1"/>
</dbReference>
<dbReference type="SMART" id="SM00220">
    <property type="entry name" value="S_TKc"/>
    <property type="match status" value="1"/>
</dbReference>
<dbReference type="SUPFAM" id="SSF56112">
    <property type="entry name" value="Protein kinase-like (PK-like)"/>
    <property type="match status" value="1"/>
</dbReference>
<dbReference type="PROSITE" id="PS50011">
    <property type="entry name" value="PROTEIN_KINASE_DOM"/>
    <property type="match status" value="1"/>
</dbReference>
<proteinExistence type="evidence at protein level"/>
<reference evidence="10" key="1">
    <citation type="journal article" date="2000" name="Science">
        <title>The genome sequence of Drosophila melanogaster.</title>
        <authorList>
            <person name="Adams M.D."/>
            <person name="Celniker S.E."/>
            <person name="Holt R.A."/>
            <person name="Evans C.A."/>
            <person name="Gocayne J.D."/>
            <person name="Amanatides P.G."/>
            <person name="Scherer S.E."/>
            <person name="Li P.W."/>
            <person name="Hoskins R.A."/>
            <person name="Galle R.F."/>
            <person name="George R.A."/>
            <person name="Lewis S.E."/>
            <person name="Richards S."/>
            <person name="Ashburner M."/>
            <person name="Henderson S.N."/>
            <person name="Sutton G.G."/>
            <person name="Wortman J.R."/>
            <person name="Yandell M.D."/>
            <person name="Zhang Q."/>
            <person name="Chen L.X."/>
            <person name="Brandon R.C."/>
            <person name="Rogers Y.-H.C."/>
            <person name="Blazej R.G."/>
            <person name="Champe M."/>
            <person name="Pfeiffer B.D."/>
            <person name="Wan K.H."/>
            <person name="Doyle C."/>
            <person name="Baxter E.G."/>
            <person name="Helt G."/>
            <person name="Nelson C.R."/>
            <person name="Miklos G.L.G."/>
            <person name="Abril J.F."/>
            <person name="Agbayani A."/>
            <person name="An H.-J."/>
            <person name="Andrews-Pfannkoch C."/>
            <person name="Baldwin D."/>
            <person name="Ballew R.M."/>
            <person name="Basu A."/>
            <person name="Baxendale J."/>
            <person name="Bayraktaroglu L."/>
            <person name="Beasley E.M."/>
            <person name="Beeson K.Y."/>
            <person name="Benos P.V."/>
            <person name="Berman B.P."/>
            <person name="Bhandari D."/>
            <person name="Bolshakov S."/>
            <person name="Borkova D."/>
            <person name="Botchan M.R."/>
            <person name="Bouck J."/>
            <person name="Brokstein P."/>
            <person name="Brottier P."/>
            <person name="Burtis K.C."/>
            <person name="Busam D.A."/>
            <person name="Butler H."/>
            <person name="Cadieu E."/>
            <person name="Center A."/>
            <person name="Chandra I."/>
            <person name="Cherry J.M."/>
            <person name="Cawley S."/>
            <person name="Dahlke C."/>
            <person name="Davenport L.B."/>
            <person name="Davies P."/>
            <person name="de Pablos B."/>
            <person name="Delcher A."/>
            <person name="Deng Z."/>
            <person name="Mays A.D."/>
            <person name="Dew I."/>
            <person name="Dietz S.M."/>
            <person name="Dodson K."/>
            <person name="Doup L.E."/>
            <person name="Downes M."/>
            <person name="Dugan-Rocha S."/>
            <person name="Dunkov B.C."/>
            <person name="Dunn P."/>
            <person name="Durbin K.J."/>
            <person name="Evangelista C.C."/>
            <person name="Ferraz C."/>
            <person name="Ferriera S."/>
            <person name="Fleischmann W."/>
            <person name="Fosler C."/>
            <person name="Gabrielian A.E."/>
            <person name="Garg N.S."/>
            <person name="Gelbart W.M."/>
            <person name="Glasser K."/>
            <person name="Glodek A."/>
            <person name="Gong F."/>
            <person name="Gorrell J.H."/>
            <person name="Gu Z."/>
            <person name="Guan P."/>
            <person name="Harris M."/>
            <person name="Harris N.L."/>
            <person name="Harvey D.A."/>
            <person name="Heiman T.J."/>
            <person name="Hernandez J.R."/>
            <person name="Houck J."/>
            <person name="Hostin D."/>
            <person name="Houston K.A."/>
            <person name="Howland T.J."/>
            <person name="Wei M.-H."/>
            <person name="Ibegwam C."/>
            <person name="Jalali M."/>
            <person name="Kalush F."/>
            <person name="Karpen G.H."/>
            <person name="Ke Z."/>
            <person name="Kennison J.A."/>
            <person name="Ketchum K.A."/>
            <person name="Kimmel B.E."/>
            <person name="Kodira C.D."/>
            <person name="Kraft C.L."/>
            <person name="Kravitz S."/>
            <person name="Kulp D."/>
            <person name="Lai Z."/>
            <person name="Lasko P."/>
            <person name="Lei Y."/>
            <person name="Levitsky A.A."/>
            <person name="Li J.H."/>
            <person name="Li Z."/>
            <person name="Liang Y."/>
            <person name="Lin X."/>
            <person name="Liu X."/>
            <person name="Mattei B."/>
            <person name="McIntosh T.C."/>
            <person name="McLeod M.P."/>
            <person name="McPherson D."/>
            <person name="Merkulov G."/>
            <person name="Milshina N.V."/>
            <person name="Mobarry C."/>
            <person name="Morris J."/>
            <person name="Moshrefi A."/>
            <person name="Mount S.M."/>
            <person name="Moy M."/>
            <person name="Murphy B."/>
            <person name="Murphy L."/>
            <person name="Muzny D.M."/>
            <person name="Nelson D.L."/>
            <person name="Nelson D.R."/>
            <person name="Nelson K.A."/>
            <person name="Nixon K."/>
            <person name="Nusskern D.R."/>
            <person name="Pacleb J.M."/>
            <person name="Palazzolo M."/>
            <person name="Pittman G.S."/>
            <person name="Pan S."/>
            <person name="Pollard J."/>
            <person name="Puri V."/>
            <person name="Reese M.G."/>
            <person name="Reinert K."/>
            <person name="Remington K."/>
            <person name="Saunders R.D.C."/>
            <person name="Scheeler F."/>
            <person name="Shen H."/>
            <person name="Shue B.C."/>
            <person name="Siden-Kiamos I."/>
            <person name="Simpson M."/>
            <person name="Skupski M.P."/>
            <person name="Smith T.J."/>
            <person name="Spier E."/>
            <person name="Spradling A.C."/>
            <person name="Stapleton M."/>
            <person name="Strong R."/>
            <person name="Sun E."/>
            <person name="Svirskas R."/>
            <person name="Tector C."/>
            <person name="Turner R."/>
            <person name="Venter E."/>
            <person name="Wang A.H."/>
            <person name="Wang X."/>
            <person name="Wang Z.-Y."/>
            <person name="Wassarman D.A."/>
            <person name="Weinstock G.M."/>
            <person name="Weissenbach J."/>
            <person name="Williams S.M."/>
            <person name="Woodage T."/>
            <person name="Worley K.C."/>
            <person name="Wu D."/>
            <person name="Yang S."/>
            <person name="Yao Q.A."/>
            <person name="Ye J."/>
            <person name="Yeh R.-F."/>
            <person name="Zaveri J.S."/>
            <person name="Zhan M."/>
            <person name="Zhang G."/>
            <person name="Zhao Q."/>
            <person name="Zheng L."/>
            <person name="Zheng X.H."/>
            <person name="Zhong F.N."/>
            <person name="Zhong W."/>
            <person name="Zhou X."/>
            <person name="Zhu S.C."/>
            <person name="Zhu X."/>
            <person name="Smith H.O."/>
            <person name="Gibbs R.A."/>
            <person name="Myers E.W."/>
            <person name="Rubin G.M."/>
            <person name="Venter J.C."/>
        </authorList>
    </citation>
    <scope>NUCLEOTIDE SEQUENCE [LARGE SCALE GENOMIC DNA]</scope>
    <source>
        <strain evidence="10">Berkeley</strain>
    </source>
</reference>
<reference evidence="10" key="2">
    <citation type="journal article" date="2002" name="Genome Biol.">
        <title>Annotation of the Drosophila melanogaster euchromatic genome: a systematic review.</title>
        <authorList>
            <person name="Misra S."/>
            <person name="Crosby M.A."/>
            <person name="Mungall C.J."/>
            <person name="Matthews B.B."/>
            <person name="Campbell K.S."/>
            <person name="Hradecky P."/>
            <person name="Huang Y."/>
            <person name="Kaminker J.S."/>
            <person name="Millburn G.H."/>
            <person name="Prochnik S.E."/>
            <person name="Smith C.D."/>
            <person name="Tupy J.L."/>
            <person name="Whitfield E.J."/>
            <person name="Bayraktaroglu L."/>
            <person name="Berman B.P."/>
            <person name="Bettencourt B.R."/>
            <person name="Celniker S.E."/>
            <person name="de Grey A.D.N.J."/>
            <person name="Drysdale R.A."/>
            <person name="Harris N.L."/>
            <person name="Richter J."/>
            <person name="Russo S."/>
            <person name="Schroeder A.J."/>
            <person name="Shu S.Q."/>
            <person name="Stapleton M."/>
            <person name="Yamada C."/>
            <person name="Ashburner M."/>
            <person name="Gelbart W.M."/>
            <person name="Rubin G.M."/>
            <person name="Lewis S.E."/>
        </authorList>
    </citation>
    <scope>GENOME REANNOTATION</scope>
    <source>
        <strain evidence="10">Berkeley</strain>
    </source>
</reference>
<reference evidence="8" key="3">
    <citation type="journal article" date="2002" name="Genome Biol.">
        <title>A Drosophila full-length cDNA resource.</title>
        <authorList>
            <person name="Stapleton M."/>
            <person name="Carlson J.W."/>
            <person name="Brokstein P."/>
            <person name="Yu C."/>
            <person name="Champe M."/>
            <person name="George R.A."/>
            <person name="Guarin H."/>
            <person name="Kronmiller B."/>
            <person name="Pacleb J.M."/>
            <person name="Park S."/>
            <person name="Wan K.H."/>
            <person name="Rubin G.M."/>
            <person name="Celniker S.E."/>
        </authorList>
    </citation>
    <scope>NUCLEOTIDE SEQUENCE [LARGE SCALE MRNA]</scope>
    <source>
        <strain evidence="8">Berkeley</strain>
        <tissue evidence="8">Embryo</tissue>
    </source>
</reference>
<reference evidence="7" key="4">
    <citation type="journal article" date="2019" name="Dev. Dyn.">
        <title>Functional analysis of Aarf domain-containing kinase 1 in Drosophila melanogaster.</title>
        <authorList>
            <person name="Wisidagama D.R."/>
            <person name="Thomas S.M."/>
            <person name="Lam G."/>
            <person name="Thummel C.S."/>
        </authorList>
    </citation>
    <scope>FUNCTION</scope>
    <scope>DISRUPTION PHENOTYPE</scope>
</reference>
<reference evidence="7" key="5">
    <citation type="journal article" date="2019" name="PLoS Genet.">
        <title>Drosophila ADCK1 is critical for maintaining mitochondrial structures and functions in the muscle.</title>
        <authorList>
            <person name="Yoon W."/>
            <person name="Hwang S.H."/>
            <person name="Lee S.H."/>
            <person name="Chung J."/>
        </authorList>
    </citation>
    <scope>FUNCTION</scope>
    <scope>DISRUPTION PHENOTYPE</scope>
    <scope>MUTAGENESIS OF 343-ARG--VAL-463</scope>
</reference>
<accession>Q9W133</accession>
<evidence type="ECO:0000250" key="1">
    <source>
        <dbReference type="UniProtKB" id="Q86TW2"/>
    </source>
</evidence>
<evidence type="ECO:0000255" key="2"/>
<evidence type="ECO:0000255" key="3">
    <source>
        <dbReference type="PROSITE-ProRule" id="PRU00159"/>
    </source>
</evidence>
<evidence type="ECO:0000269" key="4">
    <source>
    </source>
</evidence>
<evidence type="ECO:0000269" key="5">
    <source>
    </source>
</evidence>
<evidence type="ECO:0000303" key="6">
    <source>
    </source>
</evidence>
<evidence type="ECO:0000305" key="7"/>
<evidence type="ECO:0000312" key="8">
    <source>
        <dbReference type="EMBL" id="AAM50029.1"/>
    </source>
</evidence>
<evidence type="ECO:0000312" key="9">
    <source>
        <dbReference type="FlyBase" id="FBgn0035039"/>
    </source>
</evidence>
<evidence type="ECO:0000312" key="10">
    <source>
        <dbReference type="Proteomes" id="UP000000803"/>
    </source>
</evidence>
<comment type="function">
    <text evidence="1 4 5 7">Essential for maintaining mitochondrial cristae formation and mitochondrial function by acting via YME1L to regulate the mitochondrial structural proteins Opa1 and Mitofilin (PubMed:31125351). This function is likely to be kinase-independent (By similarity). Functions in tracheal development and larval molting probably by acting in sterol modification and/or intracellular lipid trafficking (PubMed:31175694). The action of this enzyme is not yet clear (Probable). It is not known if it has protein kinase activity and what type of substrate it would phosphorylate (Ser, Thr or Tyr) (Probable).</text>
</comment>
<comment type="subcellular location">
    <subcellularLocation>
        <location evidence="1">Mitochondrion</location>
    </subcellularLocation>
</comment>
<comment type="disruption phenotype">
    <text evidence="4 5">RNAi-mediated knockdown is larval lethal (PubMed:31125351, PubMed:31175694). RNAi-mediated knockdown in adults results in the thoracic muscles displaying abnormally orientated fibers as well as an abnormal increase in mitochondrial fusion resulting in mitochondrial dysfunction in ATP production, ROS generation and cell apoptosis (PubMed:31125351). Consequently, adults display a held-up wing phenotype, are unable to fly and also display defects in locomotion (PubMed:31125351). RNAi-mediated knockdown in salivary glands also results in an increase in mitochondrial fusion (PubMed:31125351). RNAi-mediated knockdown in the trachea results in arrested development at either the first or second instar larval stage (PubMed:31175694). In addition the larvae display tracheal defects, such as tracheal breaks and lumen separation, and prematurely wander away from food (PubMed:31175694).</text>
</comment>
<comment type="similarity">
    <text evidence="7">Belongs to the protein kinase superfamily. ADCK protein kinase family.</text>
</comment>
<gene>
    <name evidence="6 9" type="primary">Adck1</name>
    <name evidence="9" type="synonym">Adck</name>
    <name evidence="9" type="ORF">CG3608</name>
</gene>
<sequence>MLLRRVLGYGVVGAGLASAGWSLHTNDYDPNSLGIVRLSRSAAAVVDVALTYKRELYYKEWDKETPEYKAEKSRVHKIAAEKLLQLICINKGVYIKVGQHIGALEYLLPKEFVQTMKVLHSDAPQNPIEDLYKVIRQDLHCNPEEIFDSFEREPLGTASLAQVHKARLKTGELVAVKVQHPYVKGNSRVDMKTMELAVNVLARIFPDFKIHWLVEESKKNLPIELDFLNEGRNAEKVAKQFKKYSWLRVPKIYWKYSSSRVLVMEYLEGGHVTDLDYIRRNKIDSFAVANRIGQLYSEMIFRTGFVHSDPHPGNILVRRTPENSLEIVLLDHGLYANLTDKFRYDYSNLWLSILKVDRKAMRQHSEQLGIKGDLYGLFACMVTGRPWETVMQGLTKVKYSKEEKNTLQNNTSLVLPHISDVLEQVDRQMLLILKTNDLIRGIESTLRTQNRMTAFWVMSKCCVQSSYAEQRAKQSDSGSSRILWLRVRERWELFKLNCYYLYLGLINFGFLEALKQVI</sequence>